<keyword id="KW-0028">Amino-acid biosynthesis</keyword>
<keyword id="KW-0963">Cytoplasm</keyword>
<keyword id="KW-0521">NADP</keyword>
<keyword id="KW-0560">Oxidoreductase</keyword>
<keyword id="KW-0641">Proline biosynthesis</keyword>
<evidence type="ECO:0000255" key="1">
    <source>
        <dbReference type="HAMAP-Rule" id="MF_00412"/>
    </source>
</evidence>
<feature type="chain" id="PRO_0000252578" description="Gamma-glutamyl phosphate reductase">
    <location>
        <begin position="1"/>
        <end position="428"/>
    </location>
</feature>
<gene>
    <name evidence="1" type="primary">proA</name>
    <name type="ordered locus">Meso_3456</name>
</gene>
<organism>
    <name type="scientific">Chelativorans sp. (strain BNC1)</name>
    <dbReference type="NCBI Taxonomy" id="266779"/>
    <lineage>
        <taxon>Bacteria</taxon>
        <taxon>Pseudomonadati</taxon>
        <taxon>Pseudomonadota</taxon>
        <taxon>Alphaproteobacteria</taxon>
        <taxon>Hyphomicrobiales</taxon>
        <taxon>Phyllobacteriaceae</taxon>
        <taxon>Chelativorans</taxon>
    </lineage>
</organism>
<accession>Q11CP8</accession>
<name>PROA_CHESB</name>
<reference key="1">
    <citation type="submission" date="2006-06" db="EMBL/GenBank/DDBJ databases">
        <title>Complete sequence of chromosome of Mesorhizobium sp. BNC1.</title>
        <authorList>
            <consortium name="US DOE Joint Genome Institute"/>
            <person name="Copeland A."/>
            <person name="Lucas S."/>
            <person name="Lapidus A."/>
            <person name="Barry K."/>
            <person name="Detter J.C."/>
            <person name="Glavina del Rio T."/>
            <person name="Hammon N."/>
            <person name="Israni S."/>
            <person name="Dalin E."/>
            <person name="Tice H."/>
            <person name="Pitluck S."/>
            <person name="Chertkov O."/>
            <person name="Brettin T."/>
            <person name="Bruce D."/>
            <person name="Han C."/>
            <person name="Tapia R."/>
            <person name="Gilna P."/>
            <person name="Schmutz J."/>
            <person name="Larimer F."/>
            <person name="Land M."/>
            <person name="Hauser L."/>
            <person name="Kyrpides N."/>
            <person name="Mikhailova N."/>
            <person name="Richardson P."/>
        </authorList>
    </citation>
    <scope>NUCLEOTIDE SEQUENCE [LARGE SCALE GENOMIC DNA]</scope>
    <source>
        <strain>BNC1</strain>
    </source>
</reference>
<sequence length="428" mass="45414">MLQVREPSEHDIVTLMAELGRRGRAAARPLAVASTERKNAALLAMAEALEANTGRILAANKTDMEKGEAAGLSAAILDRLKLDEKRVRAIAEGIRAIADLDDPVGTVIAEWDRPNGLHIERVRTPLGVIGVIYESRPNVTADAGALCLKAGNAVILRGGSDSAASSAAIHSCLVEGLRKAGLPEDAIQRVPVTDREAVGEMLRGLGGNLDVIVPRGGRSLVERVQNEARVPVFAHLEGICHLYVDRSAKLDMAVALALNAKMRRTGVCGAAETLLVDRAVAGTHLVPILEALAAAGCEIRGGEDVRARFPSAISASEEDWRTEYLDAIISVKLVDGVFEAIEHIGTYSSHHTEAIVAEDPVAVQRFLNEIDSAILLHNASTQFADGGEFGMGAEIGIATGKMHARGPVGVEQLTSFKYRVHGSGQTRP</sequence>
<comment type="function">
    <text evidence="1">Catalyzes the NADPH-dependent reduction of L-glutamate 5-phosphate into L-glutamate 5-semialdehyde and phosphate. The product spontaneously undergoes cyclization to form 1-pyrroline-5-carboxylate.</text>
</comment>
<comment type="catalytic activity">
    <reaction evidence="1">
        <text>L-glutamate 5-semialdehyde + phosphate + NADP(+) = L-glutamyl 5-phosphate + NADPH + H(+)</text>
        <dbReference type="Rhea" id="RHEA:19541"/>
        <dbReference type="ChEBI" id="CHEBI:15378"/>
        <dbReference type="ChEBI" id="CHEBI:43474"/>
        <dbReference type="ChEBI" id="CHEBI:57783"/>
        <dbReference type="ChEBI" id="CHEBI:58066"/>
        <dbReference type="ChEBI" id="CHEBI:58274"/>
        <dbReference type="ChEBI" id="CHEBI:58349"/>
        <dbReference type="EC" id="1.2.1.41"/>
    </reaction>
</comment>
<comment type="pathway">
    <text evidence="1">Amino-acid biosynthesis; L-proline biosynthesis; L-glutamate 5-semialdehyde from L-glutamate: step 2/2.</text>
</comment>
<comment type="subcellular location">
    <subcellularLocation>
        <location evidence="1">Cytoplasm</location>
    </subcellularLocation>
</comment>
<comment type="similarity">
    <text evidence="1">Belongs to the gamma-glutamyl phosphate reductase family.</text>
</comment>
<proteinExistence type="inferred from homology"/>
<protein>
    <recommendedName>
        <fullName evidence="1">Gamma-glutamyl phosphate reductase</fullName>
        <shortName evidence="1">GPR</shortName>
        <ecNumber evidence="1">1.2.1.41</ecNumber>
    </recommendedName>
    <alternativeName>
        <fullName evidence="1">Glutamate-5-semialdehyde dehydrogenase</fullName>
    </alternativeName>
    <alternativeName>
        <fullName evidence="1">Glutamyl-gamma-semialdehyde dehydrogenase</fullName>
        <shortName evidence="1">GSA dehydrogenase</shortName>
    </alternativeName>
</protein>
<dbReference type="EC" id="1.2.1.41" evidence="1"/>
<dbReference type="EMBL" id="CP000390">
    <property type="protein sequence ID" value="ABG64827.1"/>
    <property type="molecule type" value="Genomic_DNA"/>
</dbReference>
<dbReference type="SMR" id="Q11CP8"/>
<dbReference type="STRING" id="266779.Meso_3456"/>
<dbReference type="KEGG" id="mes:Meso_3456"/>
<dbReference type="eggNOG" id="COG0014">
    <property type="taxonomic scope" value="Bacteria"/>
</dbReference>
<dbReference type="HOGENOM" id="CLU_030231_0_0_5"/>
<dbReference type="OrthoDB" id="9809970at2"/>
<dbReference type="UniPathway" id="UPA00098">
    <property type="reaction ID" value="UER00360"/>
</dbReference>
<dbReference type="GO" id="GO:0005737">
    <property type="term" value="C:cytoplasm"/>
    <property type="evidence" value="ECO:0007669"/>
    <property type="project" value="UniProtKB-SubCell"/>
</dbReference>
<dbReference type="GO" id="GO:0004350">
    <property type="term" value="F:glutamate-5-semialdehyde dehydrogenase activity"/>
    <property type="evidence" value="ECO:0007669"/>
    <property type="project" value="UniProtKB-UniRule"/>
</dbReference>
<dbReference type="GO" id="GO:0050661">
    <property type="term" value="F:NADP binding"/>
    <property type="evidence" value="ECO:0007669"/>
    <property type="project" value="InterPro"/>
</dbReference>
<dbReference type="GO" id="GO:0055129">
    <property type="term" value="P:L-proline biosynthetic process"/>
    <property type="evidence" value="ECO:0007669"/>
    <property type="project" value="UniProtKB-UniRule"/>
</dbReference>
<dbReference type="CDD" id="cd07079">
    <property type="entry name" value="ALDH_F18-19_ProA-GPR"/>
    <property type="match status" value="1"/>
</dbReference>
<dbReference type="Gene3D" id="3.40.605.10">
    <property type="entry name" value="Aldehyde Dehydrogenase, Chain A, domain 1"/>
    <property type="match status" value="1"/>
</dbReference>
<dbReference type="Gene3D" id="3.40.309.10">
    <property type="entry name" value="Aldehyde Dehydrogenase, Chain A, domain 2"/>
    <property type="match status" value="1"/>
</dbReference>
<dbReference type="HAMAP" id="MF_00412">
    <property type="entry name" value="ProA"/>
    <property type="match status" value="1"/>
</dbReference>
<dbReference type="InterPro" id="IPR016161">
    <property type="entry name" value="Ald_DH/histidinol_DH"/>
</dbReference>
<dbReference type="InterPro" id="IPR016163">
    <property type="entry name" value="Ald_DH_C"/>
</dbReference>
<dbReference type="InterPro" id="IPR016162">
    <property type="entry name" value="Ald_DH_N"/>
</dbReference>
<dbReference type="InterPro" id="IPR015590">
    <property type="entry name" value="Aldehyde_DH_dom"/>
</dbReference>
<dbReference type="InterPro" id="IPR020593">
    <property type="entry name" value="G-glutamylP_reductase_CS"/>
</dbReference>
<dbReference type="InterPro" id="IPR012134">
    <property type="entry name" value="Glu-5-SA_DH"/>
</dbReference>
<dbReference type="InterPro" id="IPR000965">
    <property type="entry name" value="GPR_dom"/>
</dbReference>
<dbReference type="NCBIfam" id="NF001221">
    <property type="entry name" value="PRK00197.1"/>
    <property type="match status" value="1"/>
</dbReference>
<dbReference type="NCBIfam" id="TIGR00407">
    <property type="entry name" value="proA"/>
    <property type="match status" value="1"/>
</dbReference>
<dbReference type="PANTHER" id="PTHR11063:SF8">
    <property type="entry name" value="DELTA-1-PYRROLINE-5-CARBOXYLATE SYNTHASE"/>
    <property type="match status" value="1"/>
</dbReference>
<dbReference type="PANTHER" id="PTHR11063">
    <property type="entry name" value="GLUTAMATE SEMIALDEHYDE DEHYDROGENASE"/>
    <property type="match status" value="1"/>
</dbReference>
<dbReference type="Pfam" id="PF00171">
    <property type="entry name" value="Aldedh"/>
    <property type="match status" value="1"/>
</dbReference>
<dbReference type="PIRSF" id="PIRSF000151">
    <property type="entry name" value="GPR"/>
    <property type="match status" value="1"/>
</dbReference>
<dbReference type="SUPFAM" id="SSF53720">
    <property type="entry name" value="ALDH-like"/>
    <property type="match status" value="1"/>
</dbReference>
<dbReference type="PROSITE" id="PS01223">
    <property type="entry name" value="PROA"/>
    <property type="match status" value="1"/>
</dbReference>